<accession>P75130</accession>
<evidence type="ECO:0000255" key="1"/>
<evidence type="ECO:0000305" key="2"/>
<feature type="chain" id="PRO_0000210619" description="Uncharacterized protein MG447 homolog">
    <location>
        <begin position="1"/>
        <end position="549"/>
    </location>
</feature>
<feature type="transmembrane region" description="Helical" evidence="1">
    <location>
        <begin position="27"/>
        <end position="47"/>
    </location>
</feature>
<feature type="transmembrane region" description="Helical" evidence="1">
    <location>
        <begin position="108"/>
        <end position="128"/>
    </location>
</feature>
<feature type="transmembrane region" description="Helical" evidence="1">
    <location>
        <begin position="146"/>
        <end position="166"/>
    </location>
</feature>
<feature type="transmembrane region" description="Helical" evidence="1">
    <location>
        <begin position="197"/>
        <end position="217"/>
    </location>
</feature>
<feature type="transmembrane region" description="Helical" evidence="1">
    <location>
        <begin position="233"/>
        <end position="253"/>
    </location>
</feature>
<feature type="transmembrane region" description="Helical" evidence="1">
    <location>
        <begin position="265"/>
        <end position="285"/>
    </location>
</feature>
<feature type="transmembrane region" description="Helical" evidence="1">
    <location>
        <begin position="308"/>
        <end position="328"/>
    </location>
</feature>
<feature type="transmembrane region" description="Helical" evidence="1">
    <location>
        <begin position="352"/>
        <end position="372"/>
    </location>
</feature>
<feature type="transmembrane region" description="Helical" evidence="1">
    <location>
        <begin position="399"/>
        <end position="419"/>
    </location>
</feature>
<feature type="transmembrane region" description="Helical" evidence="1">
    <location>
        <begin position="434"/>
        <end position="454"/>
    </location>
</feature>
<feature type="transmembrane region" description="Helical" evidence="1">
    <location>
        <begin position="472"/>
        <end position="492"/>
    </location>
</feature>
<feature type="transmembrane region" description="Helical" evidence="1">
    <location>
        <begin position="501"/>
        <end position="521"/>
    </location>
</feature>
<reference key="1">
    <citation type="journal article" date="1996" name="Nucleic Acids Res.">
        <title>Complete sequence analysis of the genome of the bacterium Mycoplasma pneumoniae.</title>
        <authorList>
            <person name="Himmelreich R."/>
            <person name="Hilbert H."/>
            <person name="Plagens H."/>
            <person name="Pirkl E."/>
            <person name="Li B.-C."/>
            <person name="Herrmann R."/>
        </authorList>
    </citation>
    <scope>NUCLEOTIDE SEQUENCE [LARGE SCALE GENOMIC DNA]</scope>
    <source>
        <strain>ATCC 29342 / M129 / Subtype 1</strain>
    </source>
</reference>
<proteinExistence type="predicted"/>
<sequence length="549" mass="61650">MDSQQDRLAKQVLIQKSFESKRLFLTILRFAIPTFFFALFSAAYVFVDQIMVIKFVPHGPLNPDSIFTDQALIEEFKASAFYKGGDIPNHTELTASQLVKTVLNISQPIVVILNAITIFVPLGTGVIFSKTIGKGDEKKIKDAWNTGLVSTTLFALVTQIIVLAIAKEWLQFNLDKVDEQHHVQVADQFQHFFNEKAVAIGSEYVYILIGFNIIPMLSRLFFYLGQSEGRQLFIAIVPPLSNLLNVLFVFLLVRFSTLGVVGSAVAAILVYFITFMAYVVYLISLNKRGLTYLSLRDFSFKRVSFNLFLVISMVGLASFFRNGSLSILNTFYESFLVNLTKTLTDQSDTFYLVLLTGPIAIANLTSAAIFGVLQGVRTVVSYKFGQGQLADIKRINVYTLLVCLVFAALLYLILAVGLGKEILVHLFDTSAATLMLANQFSLIVQAQVFFVAIGATSQQYFQNNNRVLYSWIVSLMQGVIVFVPLLFIFQAITLQTKNIEIFIWLLTANAALAGLINVLIGQVHIHFFMDKYFAQKHKSRIVQFIERYS</sequence>
<comment type="subcellular location">
    <subcellularLocation>
        <location evidence="2">Cell membrane</location>
        <topology evidence="2">Multi-pass membrane protein</topology>
    </subcellularLocation>
</comment>
<name>Y661_MYCPN</name>
<gene>
    <name type="ordered locus">MPN_661</name>
    <name type="ORF">K05_orf499</name>
    <name type="ORF">MP181</name>
</gene>
<organism>
    <name type="scientific">Mycoplasma pneumoniae (strain ATCC 29342 / M129 / Subtype 1)</name>
    <name type="common">Mycoplasmoides pneumoniae</name>
    <dbReference type="NCBI Taxonomy" id="272634"/>
    <lineage>
        <taxon>Bacteria</taxon>
        <taxon>Bacillati</taxon>
        <taxon>Mycoplasmatota</taxon>
        <taxon>Mycoplasmoidales</taxon>
        <taxon>Mycoplasmoidaceae</taxon>
        <taxon>Mycoplasmoides</taxon>
    </lineage>
</organism>
<protein>
    <recommendedName>
        <fullName>Uncharacterized protein MG447 homolog</fullName>
    </recommendedName>
</protein>
<dbReference type="EMBL" id="U00089">
    <property type="protein sequence ID" value="AAG34741.1"/>
    <property type="molecule type" value="Genomic_DNA"/>
</dbReference>
<dbReference type="PIR" id="S73507">
    <property type="entry name" value="S73507"/>
</dbReference>
<dbReference type="RefSeq" id="NP_110350.1">
    <property type="nucleotide sequence ID" value="NC_000912.1"/>
</dbReference>
<dbReference type="RefSeq" id="WP_010875018.1">
    <property type="nucleotide sequence ID" value="NC_000912.1"/>
</dbReference>
<dbReference type="SMR" id="P75130"/>
<dbReference type="STRING" id="272634.MPN_661"/>
<dbReference type="EnsemblBacteria" id="AAG34741">
    <property type="protein sequence ID" value="AAG34741"/>
    <property type="gene ID" value="MPN_661"/>
</dbReference>
<dbReference type="KEGG" id="mpn:MPN_661"/>
<dbReference type="PATRIC" id="fig|272634.6.peg.726"/>
<dbReference type="HOGENOM" id="CLU_468356_0_0_14"/>
<dbReference type="OrthoDB" id="396185at2"/>
<dbReference type="BioCyc" id="MPNE272634:G1GJ3-1057-MONOMER"/>
<dbReference type="Proteomes" id="UP000000808">
    <property type="component" value="Chromosome"/>
</dbReference>
<dbReference type="GO" id="GO:0005886">
    <property type="term" value="C:plasma membrane"/>
    <property type="evidence" value="ECO:0007669"/>
    <property type="project" value="UniProtKB-SubCell"/>
</dbReference>
<dbReference type="GO" id="GO:0015297">
    <property type="term" value="F:antiporter activity"/>
    <property type="evidence" value="ECO:0007669"/>
    <property type="project" value="InterPro"/>
</dbReference>
<dbReference type="GO" id="GO:0042910">
    <property type="term" value="F:xenobiotic transmembrane transporter activity"/>
    <property type="evidence" value="ECO:0007669"/>
    <property type="project" value="InterPro"/>
</dbReference>
<dbReference type="CDD" id="cd12082">
    <property type="entry name" value="MATE_like"/>
    <property type="match status" value="1"/>
</dbReference>
<dbReference type="InterPro" id="IPR002528">
    <property type="entry name" value="MATE_fam"/>
</dbReference>
<dbReference type="InterPro" id="IPR051327">
    <property type="entry name" value="MATE_MepA_subfamily"/>
</dbReference>
<dbReference type="PANTHER" id="PTHR43823:SF3">
    <property type="entry name" value="MULTIDRUG EXPORT PROTEIN MEPA"/>
    <property type="match status" value="1"/>
</dbReference>
<dbReference type="PANTHER" id="PTHR43823">
    <property type="entry name" value="SPORULATION PROTEIN YKVU"/>
    <property type="match status" value="1"/>
</dbReference>
<dbReference type="Pfam" id="PF01554">
    <property type="entry name" value="MatE"/>
    <property type="match status" value="1"/>
</dbReference>
<keyword id="KW-1003">Cell membrane</keyword>
<keyword id="KW-0472">Membrane</keyword>
<keyword id="KW-1185">Reference proteome</keyword>
<keyword id="KW-0812">Transmembrane</keyword>
<keyword id="KW-1133">Transmembrane helix</keyword>